<name>CAPP_RHOMR</name>
<comment type="function">
    <text evidence="2">Forms oxaloacetate, a four-carbon dicarboxylic acid source for the tricarboxylic acid cycle.</text>
</comment>
<comment type="catalytic activity">
    <reaction evidence="2">
        <text>oxaloacetate + phosphate = phosphoenolpyruvate + hydrogencarbonate</text>
        <dbReference type="Rhea" id="RHEA:28370"/>
        <dbReference type="ChEBI" id="CHEBI:16452"/>
        <dbReference type="ChEBI" id="CHEBI:17544"/>
        <dbReference type="ChEBI" id="CHEBI:43474"/>
        <dbReference type="ChEBI" id="CHEBI:58702"/>
        <dbReference type="EC" id="4.1.1.31"/>
    </reaction>
</comment>
<comment type="cofactor">
    <cofactor evidence="2">
        <name>Mg(2+)</name>
        <dbReference type="ChEBI" id="CHEBI:18420"/>
    </cofactor>
    <cofactor evidence="2">
        <name>Mn(2+)</name>
        <dbReference type="ChEBI" id="CHEBI:29035"/>
    </cofactor>
    <text evidence="2">Magnesium. Can also use Mn(2+) instead of Mg(2+).</text>
</comment>
<comment type="activity regulation">
    <text evidence="2">Exhibits positive allosteric property with acetyl-CoA and fructose 1,6-bisphosphate, and a negative one with L-aspartate and L-malate.</text>
</comment>
<comment type="biophysicochemical properties">
    <phDependence>
        <text evidence="2">Optimum pH is 8.0.</text>
    </phDependence>
    <temperatureDependence>
        <text evidence="2">Optimum temperature is 75 degrees Celsius.</text>
    </temperatureDependence>
</comment>
<comment type="subunit">
    <text>Homotetramer.</text>
</comment>
<comment type="similarity">
    <text evidence="3">Belongs to the PEPCase type 1 family.</text>
</comment>
<protein>
    <recommendedName>
        <fullName>Phosphoenolpyruvate carboxylase</fullName>
        <shortName>PEPC</shortName>
        <shortName>PEPCase</shortName>
        <ecNumber>4.1.1.31</ecNumber>
    </recommendedName>
</protein>
<dbReference type="EC" id="4.1.1.31"/>
<dbReference type="EMBL" id="X99379">
    <property type="protein sequence ID" value="CAA67760.1"/>
    <property type="molecule type" value="Genomic_DNA"/>
</dbReference>
<dbReference type="SMR" id="Q59757"/>
<dbReference type="GO" id="GO:0005829">
    <property type="term" value="C:cytosol"/>
    <property type="evidence" value="ECO:0007669"/>
    <property type="project" value="TreeGrafter"/>
</dbReference>
<dbReference type="GO" id="GO:0000287">
    <property type="term" value="F:magnesium ion binding"/>
    <property type="evidence" value="ECO:0007669"/>
    <property type="project" value="UniProtKB-UniRule"/>
</dbReference>
<dbReference type="GO" id="GO:0008964">
    <property type="term" value="F:phosphoenolpyruvate carboxylase activity"/>
    <property type="evidence" value="ECO:0007669"/>
    <property type="project" value="UniProtKB-UniRule"/>
</dbReference>
<dbReference type="GO" id="GO:0015977">
    <property type="term" value="P:carbon fixation"/>
    <property type="evidence" value="ECO:0007669"/>
    <property type="project" value="UniProtKB-UniRule"/>
</dbReference>
<dbReference type="GO" id="GO:0006107">
    <property type="term" value="P:oxaloacetate metabolic process"/>
    <property type="evidence" value="ECO:0007669"/>
    <property type="project" value="UniProtKB-UniRule"/>
</dbReference>
<dbReference type="GO" id="GO:0006099">
    <property type="term" value="P:tricarboxylic acid cycle"/>
    <property type="evidence" value="ECO:0007669"/>
    <property type="project" value="InterPro"/>
</dbReference>
<dbReference type="Gene3D" id="1.20.1440.90">
    <property type="entry name" value="Phosphoenolpyruvate/pyruvate domain"/>
    <property type="match status" value="1"/>
</dbReference>
<dbReference type="HAMAP" id="MF_00595">
    <property type="entry name" value="PEPcase_type1"/>
    <property type="match status" value="1"/>
</dbReference>
<dbReference type="InterPro" id="IPR021135">
    <property type="entry name" value="PEP_COase"/>
</dbReference>
<dbReference type="InterPro" id="IPR022805">
    <property type="entry name" value="PEP_COase_bac/pln-type"/>
</dbReference>
<dbReference type="InterPro" id="IPR018129">
    <property type="entry name" value="PEP_COase_Lys_AS"/>
</dbReference>
<dbReference type="InterPro" id="IPR033129">
    <property type="entry name" value="PEPCASE_His_AS"/>
</dbReference>
<dbReference type="InterPro" id="IPR015813">
    <property type="entry name" value="Pyrv/PenolPyrv_kinase-like_dom"/>
</dbReference>
<dbReference type="NCBIfam" id="NF000584">
    <property type="entry name" value="PRK00009.1"/>
    <property type="match status" value="1"/>
</dbReference>
<dbReference type="PANTHER" id="PTHR30523">
    <property type="entry name" value="PHOSPHOENOLPYRUVATE CARBOXYLASE"/>
    <property type="match status" value="1"/>
</dbReference>
<dbReference type="PANTHER" id="PTHR30523:SF6">
    <property type="entry name" value="PHOSPHOENOLPYRUVATE CARBOXYLASE"/>
    <property type="match status" value="1"/>
</dbReference>
<dbReference type="Pfam" id="PF00311">
    <property type="entry name" value="PEPcase"/>
    <property type="match status" value="1"/>
</dbReference>
<dbReference type="PRINTS" id="PR00150">
    <property type="entry name" value="PEPCARBXLASE"/>
</dbReference>
<dbReference type="SUPFAM" id="SSF51621">
    <property type="entry name" value="Phosphoenolpyruvate/pyruvate domain"/>
    <property type="match status" value="1"/>
</dbReference>
<dbReference type="PROSITE" id="PS00781">
    <property type="entry name" value="PEPCASE_1"/>
    <property type="match status" value="1"/>
</dbReference>
<dbReference type="PROSITE" id="PS00393">
    <property type="entry name" value="PEPCASE_2"/>
    <property type="match status" value="1"/>
</dbReference>
<gene>
    <name type="primary">ppc</name>
    <name type="synonym">pepC</name>
</gene>
<accession>Q59757</accession>
<feature type="chain" id="PRO_0000166617" description="Phosphoenolpyruvate carboxylase">
    <location>
        <begin position="1"/>
        <end position="936"/>
    </location>
</feature>
<feature type="active site" evidence="1">
    <location>
        <position position="155"/>
    </location>
</feature>
<feature type="active site" evidence="1">
    <location>
        <position position="595"/>
    </location>
</feature>
<sequence length="936" mass="107886">MLPPLQIEIEGTGISRPLSEHVNLLGGLLGQVIQEMAGPEMLELVETLRRLCKQAAQENRPEFREQAYTRIHSATYDELLWLLRAYTAFFHLVNQAEQQEIIRINRERAQQSTPERPRPESIDEAILALKQQGRTLDDVLTLLERLDIQPTVTAHPTEARRRSILYKQQHIAQMLSQQRRCQLTPEEQETLLLDLHNQITLLLGTAEVREERPTVRDEVEQGLYFIQSTIWEAVPRIYEDVRRALRRYYGADVDFRPFLRYRSWIGSDRDGNPYVTPEITRWTALTQRRLALQRYMEELRQLRRRLSLSDRYVAPPEELRRSLARDAREVSLPPHVLRQFRHESFRLKISYIMGRLHGLLQALDDPTQPAPDYDADAFVEDLRLLQRCLEACGLERIARHDQLTRLLVLAQTFGFHLVTLDVRQHSSVHEAAVAELLRLAGVENDYRALPESRRQELLAEELSNPRPLLPPGARVSEATRQVLETFAVIRELVQLDPRLVGSYIVSMTHTVSDLLEPMLLAKEVGLWHYERDPRTGKPGHVRCPIDFVPLFETIEDLEAAASRMEAILSHPVYRMQVAARGGFQEIMLGYSDSTKDGGYWMANWALHRAQEQLAEVCLRHGVDFRLFHGRGGTVGRGGGRANQAILAMPPVVHNGRIRFTEQGEVISFRYALPEIAHRHLEQIVNAMLRVVGLPAASGTDGTDPATRNRLMDELAARSMRAYRRLIDAPDFWSWYTRITPIDQISRLPIASRPVSRSSAREVDFESLRAIPWVFAWTQVRYLIPGWFGIGQALDELLQTSPEHLETLRTWYRSWPFFRTVLQNAQREMVRARLEIAAYYDRLLGDGPTAFHQMIEEDYHRARTAILRITDQESLLDHDPIIRKSVQLRNPYTDVLNLVQLELMRRIRSGAEADREPLRRALFLSINGIAAAMQSTG</sequence>
<evidence type="ECO:0000250" key="1"/>
<evidence type="ECO:0000269" key="2">
    <source>
    </source>
</evidence>
<evidence type="ECO:0000305" key="3"/>
<proteinExistence type="evidence at protein level"/>
<reference key="1">
    <citation type="journal article" date="1997" name="J. Biochem.">
        <title>Extremely thermostable phosphoenolpyruvate carboxylase from an extreme thermophile, Rhodothermus obamensis.</title>
        <authorList>
            <person name="Takai K."/>
            <person name="Sako Y."/>
            <person name="Uchida A."/>
            <person name="Ishida Y."/>
        </authorList>
    </citation>
    <scope>NUCLEOTIDE SEQUENCE [GENOMIC DNA]</scope>
    <scope>FUNCTION</scope>
    <scope>CATALYTIC ACTIVITY</scope>
    <scope>COFACTOR</scope>
    <scope>ACTIVITY REGULATION</scope>
    <scope>BIOPHYSICOCHEMICAL PROPERTIES</scope>
    <source>
        <strain>OKD7 / DSM 12399 / JCM 9785</strain>
    </source>
</reference>
<organism>
    <name type="scientific">Rhodothermus marinus</name>
    <name type="common">Rhodothermus obamensis</name>
    <dbReference type="NCBI Taxonomy" id="29549"/>
    <lineage>
        <taxon>Bacteria</taxon>
        <taxon>Pseudomonadati</taxon>
        <taxon>Rhodothermota</taxon>
        <taxon>Rhodothermia</taxon>
        <taxon>Rhodothermales</taxon>
        <taxon>Rhodothermaceae</taxon>
        <taxon>Rhodothermus</taxon>
    </lineage>
</organism>
<keyword id="KW-0021">Allosteric enzyme</keyword>
<keyword id="KW-0120">Carbon dioxide fixation</keyword>
<keyword id="KW-0456">Lyase</keyword>
<keyword id="KW-0460">Magnesium</keyword>
<keyword id="KW-0464">Manganese</keyword>